<name>YQGF_RICCN</name>
<reference key="1">
    <citation type="journal article" date="2001" name="Science">
        <title>Mechanisms of evolution in Rickettsia conorii and R. prowazekii.</title>
        <authorList>
            <person name="Ogata H."/>
            <person name="Audic S."/>
            <person name="Renesto-Audiffren P."/>
            <person name="Fournier P.-E."/>
            <person name="Barbe V."/>
            <person name="Samson D."/>
            <person name="Roux V."/>
            <person name="Cossart P."/>
            <person name="Weissenbach J."/>
            <person name="Claverie J.-M."/>
            <person name="Raoult D."/>
        </authorList>
    </citation>
    <scope>NUCLEOTIDE SEQUENCE [LARGE SCALE GENOMIC DNA]</scope>
    <source>
        <strain>ATCC VR-613 / Malish 7</strain>
    </source>
</reference>
<comment type="function">
    <text evidence="1">Could be a nuclease involved in processing of the 5'-end of pre-16S rRNA.</text>
</comment>
<comment type="subcellular location">
    <subcellularLocation>
        <location evidence="1">Cytoplasm</location>
    </subcellularLocation>
</comment>
<comment type="similarity">
    <text evidence="1">Belongs to the YqgF nuclease family.</text>
</comment>
<feature type="chain" id="PRO_0000172128" description="Putative pre-16S rRNA nuclease">
    <location>
        <begin position="1"/>
        <end position="154"/>
    </location>
</feature>
<sequence length="154" mass="17172">MIIKNLQEFYRLLIPNVPLIAIDYGNKKLGIALSNQERSIAMPLNTITEINKKIVITSLLNIIEKYKVCGVIIGLPIDMSGAVTEQTNIVMKFAEELAKSINLPIYLQDERLTTKAANNLLKSFGVKRKDRNNNDDAVAASMILETVLDSIKNI</sequence>
<proteinExistence type="inferred from homology"/>
<dbReference type="EC" id="3.1.-.-" evidence="1"/>
<dbReference type="EMBL" id="AE006914">
    <property type="protein sequence ID" value="AAL02993.1"/>
    <property type="molecule type" value="Genomic_DNA"/>
</dbReference>
<dbReference type="PIR" id="G97756">
    <property type="entry name" value="G97756"/>
</dbReference>
<dbReference type="RefSeq" id="WP_010977099.1">
    <property type="nucleotide sequence ID" value="NC_003103.1"/>
</dbReference>
<dbReference type="SMR" id="Q92IG5"/>
<dbReference type="GeneID" id="927590"/>
<dbReference type="KEGG" id="rco:RC0455"/>
<dbReference type="PATRIC" id="fig|272944.4.peg.520"/>
<dbReference type="HOGENOM" id="CLU_098240_2_2_5"/>
<dbReference type="Proteomes" id="UP000000816">
    <property type="component" value="Chromosome"/>
</dbReference>
<dbReference type="GO" id="GO:0005829">
    <property type="term" value="C:cytosol"/>
    <property type="evidence" value="ECO:0007669"/>
    <property type="project" value="TreeGrafter"/>
</dbReference>
<dbReference type="GO" id="GO:0004518">
    <property type="term" value="F:nuclease activity"/>
    <property type="evidence" value="ECO:0007669"/>
    <property type="project" value="UniProtKB-KW"/>
</dbReference>
<dbReference type="GO" id="GO:0000967">
    <property type="term" value="P:rRNA 5'-end processing"/>
    <property type="evidence" value="ECO:0007669"/>
    <property type="project" value="UniProtKB-UniRule"/>
</dbReference>
<dbReference type="CDD" id="cd16964">
    <property type="entry name" value="YqgF"/>
    <property type="match status" value="1"/>
</dbReference>
<dbReference type="Gene3D" id="3.30.420.140">
    <property type="entry name" value="YqgF/RNase H-like domain"/>
    <property type="match status" value="1"/>
</dbReference>
<dbReference type="HAMAP" id="MF_00651">
    <property type="entry name" value="Nuclease_YqgF"/>
    <property type="match status" value="1"/>
</dbReference>
<dbReference type="InterPro" id="IPR012337">
    <property type="entry name" value="RNaseH-like_sf"/>
</dbReference>
<dbReference type="InterPro" id="IPR005227">
    <property type="entry name" value="YqgF"/>
</dbReference>
<dbReference type="InterPro" id="IPR006641">
    <property type="entry name" value="YqgF/RNaseH-like_dom"/>
</dbReference>
<dbReference type="InterPro" id="IPR037027">
    <property type="entry name" value="YqgF/RNaseH-like_dom_sf"/>
</dbReference>
<dbReference type="NCBIfam" id="TIGR00250">
    <property type="entry name" value="RNAse_H_YqgF"/>
    <property type="match status" value="1"/>
</dbReference>
<dbReference type="PANTHER" id="PTHR33317">
    <property type="entry name" value="POLYNUCLEOTIDYL TRANSFERASE, RIBONUCLEASE H-LIKE SUPERFAMILY PROTEIN"/>
    <property type="match status" value="1"/>
</dbReference>
<dbReference type="PANTHER" id="PTHR33317:SF4">
    <property type="entry name" value="POLYNUCLEOTIDYL TRANSFERASE, RIBONUCLEASE H-LIKE SUPERFAMILY PROTEIN"/>
    <property type="match status" value="1"/>
</dbReference>
<dbReference type="Pfam" id="PF03652">
    <property type="entry name" value="RuvX"/>
    <property type="match status" value="1"/>
</dbReference>
<dbReference type="SMART" id="SM00732">
    <property type="entry name" value="YqgFc"/>
    <property type="match status" value="1"/>
</dbReference>
<dbReference type="SUPFAM" id="SSF53098">
    <property type="entry name" value="Ribonuclease H-like"/>
    <property type="match status" value="1"/>
</dbReference>
<keyword id="KW-0963">Cytoplasm</keyword>
<keyword id="KW-0378">Hydrolase</keyword>
<keyword id="KW-0540">Nuclease</keyword>
<keyword id="KW-0690">Ribosome biogenesis</keyword>
<organism>
    <name type="scientific">Rickettsia conorii (strain ATCC VR-613 / Malish 7)</name>
    <dbReference type="NCBI Taxonomy" id="272944"/>
    <lineage>
        <taxon>Bacteria</taxon>
        <taxon>Pseudomonadati</taxon>
        <taxon>Pseudomonadota</taxon>
        <taxon>Alphaproteobacteria</taxon>
        <taxon>Rickettsiales</taxon>
        <taxon>Rickettsiaceae</taxon>
        <taxon>Rickettsieae</taxon>
        <taxon>Rickettsia</taxon>
        <taxon>spotted fever group</taxon>
    </lineage>
</organism>
<protein>
    <recommendedName>
        <fullName evidence="1">Putative pre-16S rRNA nuclease</fullName>
        <ecNumber evidence="1">3.1.-.-</ecNumber>
    </recommendedName>
</protein>
<evidence type="ECO:0000255" key="1">
    <source>
        <dbReference type="HAMAP-Rule" id="MF_00651"/>
    </source>
</evidence>
<accession>Q92IG5</accession>
<gene>
    <name type="ordered locus">RC0455</name>
</gene>